<feature type="chain" id="PRO_0000419202" description="Bcl-2-interacting killer">
    <location>
        <begin position="1"/>
        <end position="150"/>
    </location>
</feature>
<feature type="transmembrane region" description="Helical" evidence="2">
    <location>
        <begin position="127"/>
        <end position="147"/>
    </location>
</feature>
<feature type="region of interest" description="Leucine-zipper" evidence="2">
    <location>
        <begin position="127"/>
        <end position="148"/>
    </location>
</feature>
<feature type="short sequence motif" description="BH3" evidence="1">
    <location>
        <begin position="51"/>
        <end position="65"/>
    </location>
</feature>
<feature type="site" description="Cleavage; by RHBDL4/RHBDD1" evidence="1">
    <location>
        <begin position="143"/>
        <end position="144"/>
    </location>
</feature>
<accession>O70337</accession>
<comment type="function">
    <text evidence="3">Accelerates programmed cell death. Binding to the apoptosis repressors Bcl-X(L), BHRF1 or Bcl-2 suppresses this death-promoting activity.</text>
</comment>
<comment type="subunit">
    <text evidence="1">Interacts with RHBDL4/RHBDD1. Interacts with BCL2L10/BCL-B.</text>
</comment>
<comment type="subcellular location">
    <subcellularLocation>
        <location evidence="1">Endomembrane system</location>
        <topology evidence="2">Single-pass membrane protein</topology>
    </subcellularLocation>
    <subcellularLocation>
        <location evidence="3">Mitochondrion membrane</location>
        <topology evidence="2">Single-pass membrane protein</topology>
    </subcellularLocation>
    <text evidence="1">Around the nuclear envelope, and in cytoplasmic membranes.</text>
</comment>
<comment type="tissue specificity">
    <text evidence="3">Expressed in testis, kidney, liver, lung and heart.</text>
</comment>
<comment type="domain">
    <text evidence="1">Intact BH3 motif is required by BIK, BID, BAK, BAD and BAX for their pro-apoptotic activity and for their interaction with anti-apoptotic members of the Bcl-2 family.</text>
</comment>
<comment type="PTM">
    <text evidence="1">Proteolytically cleaved by RHBDL4/RHBDD1. RHBDL4/RHBDD1-induced cleavage is a necessary step prior its degradation by the proteosome-dependent mechanism.</text>
</comment>
<comment type="PTM">
    <text evidence="1">Ubiquitinated by the ECS(ASB11) complex in response to endoplasmic reticulum stress, leading to substrate recognition by the segregase p97/VCP and degradation by the proteasome.</text>
</comment>
<gene>
    <name type="primary">Bik</name>
    <name type="synonym">Biklk</name>
    <name type="synonym">Blk</name>
    <name type="synonym">Nbk</name>
</gene>
<sequence length="150" mass="16901">MSEARLMARDVIKTVPHDQVPQPPVASETPSMKEPVRDVDLMECVEGRNQVALRLACIGDEMDLCLRSPRLVQLPGIAIHRLAVTYSRTGVRGIFRSLIRSLTNLRENIWSWRVLTPGAWVSPDQDPGQLFPMVLLVFLLLGGAWYLQLQ</sequence>
<dbReference type="EMBL" id="AF048838">
    <property type="protein sequence ID" value="AAC40079.1"/>
    <property type="molecule type" value="mRNA"/>
</dbReference>
<dbReference type="EMBL" id="AL583889">
    <property type="status" value="NOT_ANNOTATED_CDS"/>
    <property type="molecule type" value="Genomic_DNA"/>
</dbReference>
<dbReference type="EMBL" id="CH467427">
    <property type="protein sequence ID" value="EDL01409.1"/>
    <property type="molecule type" value="Genomic_DNA"/>
</dbReference>
<dbReference type="CCDS" id="CCDS27703.1"/>
<dbReference type="RefSeq" id="NP_031572.1">
    <property type="nucleotide sequence ID" value="NM_007546.2"/>
</dbReference>
<dbReference type="RefSeq" id="XP_006520418.1">
    <property type="nucleotide sequence ID" value="XM_006520355.3"/>
</dbReference>
<dbReference type="RefSeq" id="XP_006520419.1">
    <property type="nucleotide sequence ID" value="XM_006520356.2"/>
</dbReference>
<dbReference type="RefSeq" id="XP_006520420.1">
    <property type="nucleotide sequence ID" value="XM_006520357.3"/>
</dbReference>
<dbReference type="ComplexPortal" id="CPX-310">
    <property type="entry name" value="BIK:BCL-w complex"/>
</dbReference>
<dbReference type="ELM" id="O70337"/>
<dbReference type="FunCoup" id="O70337">
    <property type="interactions" value="9"/>
</dbReference>
<dbReference type="STRING" id="10090.ENSMUSP00000155083"/>
<dbReference type="iPTMnet" id="O70337"/>
<dbReference type="PhosphoSitePlus" id="O70337"/>
<dbReference type="PaxDb" id="10090-ENSMUSP00000016902"/>
<dbReference type="Antibodypedia" id="13376">
    <property type="antibodies" value="533 antibodies from 37 providers"/>
</dbReference>
<dbReference type="DNASU" id="12124"/>
<dbReference type="Ensembl" id="ENSMUST00000016902.5">
    <property type="protein sequence ID" value="ENSMUSP00000016902.4"/>
    <property type="gene ID" value="ENSMUSG00000016758.5"/>
</dbReference>
<dbReference type="Ensembl" id="ENSMUST00000230912.2">
    <property type="protein sequence ID" value="ENSMUSP00000155083.2"/>
    <property type="gene ID" value="ENSMUSG00000016758.5"/>
</dbReference>
<dbReference type="GeneID" id="12124"/>
<dbReference type="KEGG" id="mmu:12124"/>
<dbReference type="UCSC" id="uc007xbd.1">
    <property type="organism name" value="mouse"/>
</dbReference>
<dbReference type="AGR" id="MGI:1206591"/>
<dbReference type="CTD" id="638"/>
<dbReference type="MGI" id="MGI:1206591">
    <property type="gene designation" value="Bik"/>
</dbReference>
<dbReference type="VEuPathDB" id="HostDB:ENSMUSG00000016758"/>
<dbReference type="eggNOG" id="ENOG502TF5K">
    <property type="taxonomic scope" value="Eukaryota"/>
</dbReference>
<dbReference type="GeneTree" id="ENSGT00530000064453"/>
<dbReference type="HOGENOM" id="CLU_139842_0_0_1"/>
<dbReference type="InParanoid" id="O70337"/>
<dbReference type="OMA" id="ECMEGSD"/>
<dbReference type="OrthoDB" id="9799917at2759"/>
<dbReference type="TreeFam" id="TF338339"/>
<dbReference type="BioGRID-ORCS" id="12124">
    <property type="hits" value="2 hits in 77 CRISPR screens"/>
</dbReference>
<dbReference type="ChiTaRS" id="Bik">
    <property type="organism name" value="mouse"/>
</dbReference>
<dbReference type="PRO" id="PR:O70337"/>
<dbReference type="Proteomes" id="UP000000589">
    <property type="component" value="Chromosome 15"/>
</dbReference>
<dbReference type="RNAct" id="O70337">
    <property type="molecule type" value="protein"/>
</dbReference>
<dbReference type="Bgee" id="ENSMUSG00000016758">
    <property type="expression patterns" value="Expressed in right kidney and 142 other cell types or tissues"/>
</dbReference>
<dbReference type="ExpressionAtlas" id="O70337">
    <property type="expression patterns" value="baseline and differential"/>
</dbReference>
<dbReference type="GO" id="GO:0097136">
    <property type="term" value="C:Bcl-2 family protein complex"/>
    <property type="evidence" value="ECO:0000266"/>
    <property type="project" value="ComplexPortal"/>
</dbReference>
<dbReference type="GO" id="GO:0012505">
    <property type="term" value="C:endomembrane system"/>
    <property type="evidence" value="ECO:0007669"/>
    <property type="project" value="UniProtKB-SubCell"/>
</dbReference>
<dbReference type="GO" id="GO:0005740">
    <property type="term" value="C:mitochondrial envelope"/>
    <property type="evidence" value="ECO:0000314"/>
    <property type="project" value="MGI"/>
</dbReference>
<dbReference type="GO" id="GO:0031966">
    <property type="term" value="C:mitochondrial membrane"/>
    <property type="evidence" value="ECO:0007669"/>
    <property type="project" value="UniProtKB-SubCell"/>
</dbReference>
<dbReference type="GO" id="GO:0008637">
    <property type="term" value="P:apoptotic mitochondrial changes"/>
    <property type="evidence" value="ECO:0000314"/>
    <property type="project" value="MGI"/>
</dbReference>
<dbReference type="GO" id="GO:0008584">
    <property type="term" value="P:male gonad development"/>
    <property type="evidence" value="ECO:0000316"/>
    <property type="project" value="MGI"/>
</dbReference>
<dbReference type="GO" id="GO:0042981">
    <property type="term" value="P:regulation of apoptotic process"/>
    <property type="evidence" value="ECO:0000266"/>
    <property type="project" value="ComplexPortal"/>
</dbReference>
<dbReference type="GO" id="GO:0007283">
    <property type="term" value="P:spermatogenesis"/>
    <property type="evidence" value="ECO:0000316"/>
    <property type="project" value="MGI"/>
</dbReference>
<dbReference type="InterPro" id="IPR024579">
    <property type="entry name" value="Bcl2-int_killer"/>
</dbReference>
<dbReference type="PANTHER" id="PTHR15018">
    <property type="entry name" value="BCL-2-INTERACTING KILLER"/>
    <property type="match status" value="1"/>
</dbReference>
<dbReference type="PANTHER" id="PTHR15018:SF1">
    <property type="entry name" value="BCL-2-INTERACTING KILLER"/>
    <property type="match status" value="1"/>
</dbReference>
<dbReference type="Pfam" id="PF12201">
    <property type="entry name" value="bcl-2I13"/>
    <property type="match status" value="1"/>
</dbReference>
<name>BIK_MOUSE</name>
<reference key="1">
    <citation type="journal article" date="1998" name="J. Biol. Chem.">
        <title>Blk, a BH3-containing mouse protein that interacts with Bcl-2 and Bcl-xL, is a potent death agonist.</title>
        <authorList>
            <person name="Hegde R."/>
            <person name="Srinivasula S.M."/>
            <person name="Ahmad M."/>
            <person name="Fernandes-Alnemri T."/>
            <person name="Alnemri E.S."/>
        </authorList>
    </citation>
    <scope>NUCLEOTIDE SEQUENCE [MRNA]</scope>
    <scope>FUNCTION IN APOPTOSIS</scope>
    <scope>SUBCELLULAR LOCATION</scope>
    <scope>TISSUE SPECIFICITY</scope>
    <source>
        <tissue>Embryo</tissue>
    </source>
</reference>
<reference key="2">
    <citation type="journal article" date="2009" name="PLoS Biol.">
        <title>Lineage-specific biology revealed by a finished genome assembly of the mouse.</title>
        <authorList>
            <person name="Church D.M."/>
            <person name="Goodstadt L."/>
            <person name="Hillier L.W."/>
            <person name="Zody M.C."/>
            <person name="Goldstein S."/>
            <person name="She X."/>
            <person name="Bult C.J."/>
            <person name="Agarwala R."/>
            <person name="Cherry J.L."/>
            <person name="DiCuccio M."/>
            <person name="Hlavina W."/>
            <person name="Kapustin Y."/>
            <person name="Meric P."/>
            <person name="Maglott D."/>
            <person name="Birtle Z."/>
            <person name="Marques A.C."/>
            <person name="Graves T."/>
            <person name="Zhou S."/>
            <person name="Teague B."/>
            <person name="Potamousis K."/>
            <person name="Churas C."/>
            <person name="Place M."/>
            <person name="Herschleb J."/>
            <person name="Runnheim R."/>
            <person name="Forrest D."/>
            <person name="Amos-Landgraf J."/>
            <person name="Schwartz D.C."/>
            <person name="Cheng Z."/>
            <person name="Lindblad-Toh K."/>
            <person name="Eichler E.E."/>
            <person name="Ponting C.P."/>
        </authorList>
    </citation>
    <scope>NUCLEOTIDE SEQUENCE [LARGE SCALE GENOMIC DNA]</scope>
    <source>
        <strain>C57BL/6J</strain>
    </source>
</reference>
<reference key="3">
    <citation type="submission" date="2005-07" db="EMBL/GenBank/DDBJ databases">
        <authorList>
            <person name="Mural R.J."/>
            <person name="Adams M.D."/>
            <person name="Myers E.W."/>
            <person name="Smith H.O."/>
            <person name="Venter J.C."/>
        </authorList>
    </citation>
    <scope>NUCLEOTIDE SEQUENCE [LARGE SCALE GENOMIC DNA]</scope>
</reference>
<proteinExistence type="evidence at protein level"/>
<evidence type="ECO:0000250" key="1">
    <source>
        <dbReference type="UniProtKB" id="Q13323"/>
    </source>
</evidence>
<evidence type="ECO:0000255" key="2"/>
<evidence type="ECO:0000269" key="3">
    <source>
    </source>
</evidence>
<keyword id="KW-0053">Apoptosis</keyword>
<keyword id="KW-0472">Membrane</keyword>
<keyword id="KW-0496">Mitochondrion</keyword>
<keyword id="KW-1185">Reference proteome</keyword>
<keyword id="KW-0812">Transmembrane</keyword>
<keyword id="KW-1133">Transmembrane helix</keyword>
<keyword id="KW-0832">Ubl conjugation</keyword>
<protein>
    <recommendedName>
        <fullName>Bcl-2-interacting killer</fullName>
    </recommendedName>
    <alternativeName>
        <fullName>Apoptosis inducer NBK</fullName>
    </alternativeName>
    <alternativeName>
        <fullName>Bik-like killer protein</fullName>
    </alternativeName>
</protein>
<organism>
    <name type="scientific">Mus musculus</name>
    <name type="common">Mouse</name>
    <dbReference type="NCBI Taxonomy" id="10090"/>
    <lineage>
        <taxon>Eukaryota</taxon>
        <taxon>Metazoa</taxon>
        <taxon>Chordata</taxon>
        <taxon>Craniata</taxon>
        <taxon>Vertebrata</taxon>
        <taxon>Euteleostomi</taxon>
        <taxon>Mammalia</taxon>
        <taxon>Eutheria</taxon>
        <taxon>Euarchontoglires</taxon>
        <taxon>Glires</taxon>
        <taxon>Rodentia</taxon>
        <taxon>Myomorpha</taxon>
        <taxon>Muroidea</taxon>
        <taxon>Muridae</taxon>
        <taxon>Murinae</taxon>
        <taxon>Mus</taxon>
        <taxon>Mus</taxon>
    </lineage>
</organism>